<organism>
    <name type="scientific">Danio rerio</name>
    <name type="common">Zebrafish</name>
    <name type="synonym">Brachydanio rerio</name>
    <dbReference type="NCBI Taxonomy" id="7955"/>
    <lineage>
        <taxon>Eukaryota</taxon>
        <taxon>Metazoa</taxon>
        <taxon>Chordata</taxon>
        <taxon>Craniata</taxon>
        <taxon>Vertebrata</taxon>
        <taxon>Euteleostomi</taxon>
        <taxon>Actinopterygii</taxon>
        <taxon>Neopterygii</taxon>
        <taxon>Teleostei</taxon>
        <taxon>Ostariophysi</taxon>
        <taxon>Cypriniformes</taxon>
        <taxon>Danionidae</taxon>
        <taxon>Danioninae</taxon>
        <taxon>Danio</taxon>
    </lineage>
</organism>
<gene>
    <name type="primary">mfsd5</name>
    <name type="ORF">zgc:91807</name>
</gene>
<accession>Q6DG19</accession>
<sequence length="481" mass="52789">MFVTAYLAFIVLAGLCVALEITARRLTLSQATQTAVANPAFQRFQKLFLKAYLLALWADWLQGPYLYKLYRHYNFLESQIAILYVCGLASCVLFAPVAGWLPQFLGRRQTCLLFCLAYSVCCITKLSQDYFMLILGRVLGGLSTSLLTTTFEAWYVHGHVDIHDFPKEWIPVTFGKVANWNYGLAVGAGLVANLFAEWLGLGPVAPFLLAIPSLAACAWFVLSEWGQEDKQEGMNGDKNAPLLNSLNTPKLQLSARARFWRSCVDGLRCLLSDRRVMLLGGVQALFESVLYIFVFLWTPVLDPHGPPLGIVFSSLMAATMAGSTLFRLATSAPYRLQPGHLLCLAILLAFFSFFMLTFSTVPGQPRPRESLLAFLLLELACGLYFPAVSFLQGRVVPVERRAAVLAWFRLPLHLLACLGLLALHGEVSGSGAGEAGSGTRHMFAGCAGMMLAALLAVISLFTVGRNDADLRLEGPKLEGEI</sequence>
<keyword id="KW-1003">Cell membrane</keyword>
<keyword id="KW-0406">Ion transport</keyword>
<keyword id="KW-0472">Membrane</keyword>
<keyword id="KW-1185">Reference proteome</keyword>
<keyword id="KW-0812">Transmembrane</keyword>
<keyword id="KW-1133">Transmembrane helix</keyword>
<keyword id="KW-0813">Transport</keyword>
<dbReference type="EMBL" id="BC076536">
    <property type="protein sequence ID" value="AAH76536.1"/>
    <property type="molecule type" value="mRNA"/>
</dbReference>
<dbReference type="RefSeq" id="NP_001002713.1">
    <property type="nucleotide sequence ID" value="NM_001002713.1"/>
</dbReference>
<dbReference type="RefSeq" id="XP_005162430.1">
    <property type="nucleotide sequence ID" value="XM_005162373.5"/>
</dbReference>
<dbReference type="RefSeq" id="XP_005162431.1">
    <property type="nucleotide sequence ID" value="XM_005162374.5"/>
</dbReference>
<dbReference type="RefSeq" id="XP_009295317.1">
    <property type="nucleotide sequence ID" value="XM_009297042.4"/>
</dbReference>
<dbReference type="RefSeq" id="XP_021325459.1">
    <property type="nucleotide sequence ID" value="XM_021469784.2"/>
</dbReference>
<dbReference type="RefSeq" id="XP_021325460.1">
    <property type="nucleotide sequence ID" value="XM_021469785.2"/>
</dbReference>
<dbReference type="RefSeq" id="XP_068072833.1">
    <property type="nucleotide sequence ID" value="XM_068216732.1"/>
</dbReference>
<dbReference type="RefSeq" id="XP_068072834.1">
    <property type="nucleotide sequence ID" value="XM_068216733.1"/>
</dbReference>
<dbReference type="RefSeq" id="XP_068072835.1">
    <property type="nucleotide sequence ID" value="XM_068216734.1"/>
</dbReference>
<dbReference type="FunCoup" id="Q6DG19">
    <property type="interactions" value="414"/>
</dbReference>
<dbReference type="STRING" id="7955.ENSDARP00000004281"/>
<dbReference type="TCDB" id="2.A.1.40.1">
    <property type="family name" value="the major facilitator superfamily (mfs)"/>
</dbReference>
<dbReference type="PaxDb" id="7955-ENSDARP00000004281"/>
<dbReference type="Ensembl" id="ENSDART00000011004">
    <property type="protein sequence ID" value="ENSDARP00000004281"/>
    <property type="gene ID" value="ENSDARG00000015997"/>
</dbReference>
<dbReference type="GeneID" id="436986"/>
<dbReference type="KEGG" id="dre:436986"/>
<dbReference type="AGR" id="ZFIN:ZDB-GENE-040718-468"/>
<dbReference type="CTD" id="84975"/>
<dbReference type="ZFIN" id="ZDB-GENE-040718-468">
    <property type="gene designation" value="mfsd5"/>
</dbReference>
<dbReference type="eggNOG" id="KOG4332">
    <property type="taxonomic scope" value="Eukaryota"/>
</dbReference>
<dbReference type="HOGENOM" id="CLU_034007_2_0_1"/>
<dbReference type="InParanoid" id="Q6DG19"/>
<dbReference type="OMA" id="CCGWVVL"/>
<dbReference type="OrthoDB" id="263957at2759"/>
<dbReference type="PhylomeDB" id="Q6DG19"/>
<dbReference type="TreeFam" id="TF328562"/>
<dbReference type="PRO" id="PR:Q6DG19"/>
<dbReference type="Proteomes" id="UP000000437">
    <property type="component" value="Chromosome 23"/>
</dbReference>
<dbReference type="Bgee" id="ENSDARG00000015997">
    <property type="expression patterns" value="Expressed in blastula and 22 other cell types or tissues"/>
</dbReference>
<dbReference type="ExpressionAtlas" id="Q6DG19">
    <property type="expression patterns" value="baseline and differential"/>
</dbReference>
<dbReference type="GO" id="GO:0005886">
    <property type="term" value="C:plasma membrane"/>
    <property type="evidence" value="ECO:0007669"/>
    <property type="project" value="UniProtKB-SubCell"/>
</dbReference>
<dbReference type="GO" id="GO:0015098">
    <property type="term" value="F:molybdate ion transmembrane transporter activity"/>
    <property type="evidence" value="ECO:0007669"/>
    <property type="project" value="InterPro"/>
</dbReference>
<dbReference type="GO" id="GO:0006811">
    <property type="term" value="P:monoatomic ion transport"/>
    <property type="evidence" value="ECO:0007669"/>
    <property type="project" value="UniProtKB-KW"/>
</dbReference>
<dbReference type="CDD" id="cd17487">
    <property type="entry name" value="MFS_MFSD5_like"/>
    <property type="match status" value="1"/>
</dbReference>
<dbReference type="Gene3D" id="1.20.1250.20">
    <property type="entry name" value="MFS general substrate transporter like domains"/>
    <property type="match status" value="1"/>
</dbReference>
<dbReference type="InterPro" id="IPR036259">
    <property type="entry name" value="MFS_trans_sf"/>
</dbReference>
<dbReference type="InterPro" id="IPR008509">
    <property type="entry name" value="MOT2/MFSD5"/>
</dbReference>
<dbReference type="PANTHER" id="PTHR23516:SF1">
    <property type="entry name" value="MOLYBDATE-ANION TRANSPORTER"/>
    <property type="match status" value="1"/>
</dbReference>
<dbReference type="PANTHER" id="PTHR23516">
    <property type="entry name" value="SAM (S-ADENOSYL METHIONINE) TRANSPORTER"/>
    <property type="match status" value="1"/>
</dbReference>
<dbReference type="Pfam" id="PF05631">
    <property type="entry name" value="MFS_5"/>
    <property type="match status" value="1"/>
</dbReference>
<dbReference type="SUPFAM" id="SSF103473">
    <property type="entry name" value="MFS general substrate transporter"/>
    <property type="match status" value="1"/>
</dbReference>
<name>MFSD5_DANRE</name>
<evidence type="ECO:0000250" key="1"/>
<evidence type="ECO:0000255" key="2"/>
<evidence type="ECO:0000305" key="3"/>
<comment type="function">
    <text evidence="1">Mediates high-affinity intracellular uptake of the rare oligo-element molybdenum.</text>
</comment>
<comment type="subcellular location">
    <subcellularLocation>
        <location evidence="1">Cell membrane</location>
        <topology evidence="1">Multi-pass membrane protein</topology>
    </subcellularLocation>
</comment>
<comment type="similarity">
    <text evidence="3">Belongs to the major facilitator superfamily.</text>
</comment>
<feature type="chain" id="PRO_0000273404" description="Molybdate-anion transporter">
    <location>
        <begin position="1"/>
        <end position="481"/>
    </location>
</feature>
<feature type="transmembrane region" description="Helical" evidence="2">
    <location>
        <begin position="1"/>
        <end position="21"/>
    </location>
</feature>
<feature type="transmembrane region" description="Helical" evidence="2">
    <location>
        <begin position="47"/>
        <end position="67"/>
    </location>
</feature>
<feature type="transmembrane region" description="Helical" evidence="2">
    <location>
        <begin position="80"/>
        <end position="100"/>
    </location>
</feature>
<feature type="transmembrane region" description="Helical" evidence="2">
    <location>
        <begin position="131"/>
        <end position="151"/>
    </location>
</feature>
<feature type="transmembrane region" description="Helical" evidence="2">
    <location>
        <begin position="180"/>
        <end position="200"/>
    </location>
</feature>
<feature type="transmembrane region" description="Helical" evidence="2">
    <location>
        <begin position="201"/>
        <end position="221"/>
    </location>
</feature>
<feature type="transmembrane region" description="Helical" evidence="2">
    <location>
        <begin position="276"/>
        <end position="296"/>
    </location>
</feature>
<feature type="transmembrane region" description="Helical" evidence="2">
    <location>
        <begin position="306"/>
        <end position="326"/>
    </location>
</feature>
<feature type="transmembrane region" description="Helical" evidence="2">
    <location>
        <begin position="341"/>
        <end position="361"/>
    </location>
</feature>
<feature type="transmembrane region" description="Helical" evidence="2">
    <location>
        <begin position="371"/>
        <end position="391"/>
    </location>
</feature>
<feature type="transmembrane region" description="Helical" evidence="2">
    <location>
        <begin position="403"/>
        <end position="423"/>
    </location>
</feature>
<feature type="transmembrane region" description="Helical" evidence="2">
    <location>
        <begin position="443"/>
        <end position="463"/>
    </location>
</feature>
<protein>
    <recommendedName>
        <fullName>Molybdate-anion transporter</fullName>
    </recommendedName>
    <alternativeName>
        <fullName>Major facilitator superfamily domain-containing protein 5</fullName>
    </alternativeName>
    <alternativeName>
        <fullName>Molybdate transporter 2 homolog</fullName>
    </alternativeName>
</protein>
<proteinExistence type="evidence at transcript level"/>
<reference key="1">
    <citation type="submission" date="2004-07" db="EMBL/GenBank/DDBJ databases">
        <authorList>
            <consortium name="NIH - Zebrafish Gene Collection (ZGC) project"/>
        </authorList>
    </citation>
    <scope>NUCLEOTIDE SEQUENCE [LARGE SCALE MRNA]</scope>
</reference>